<feature type="signal peptide" evidence="1">
    <location>
        <begin position="1"/>
        <end position="25"/>
    </location>
</feature>
<feature type="chain" id="PRO_0000318502" description="Cadherin-related family member 1a">
    <location>
        <begin position="26"/>
        <end position="857"/>
    </location>
</feature>
<feature type="topological domain" description="Extracellular" evidence="1">
    <location>
        <begin position="26"/>
        <end position="709"/>
    </location>
</feature>
<feature type="transmembrane region" description="Helical" evidence="1">
    <location>
        <begin position="710"/>
        <end position="730"/>
    </location>
</feature>
<feature type="topological domain" description="Cytoplasmic" evidence="1">
    <location>
        <begin position="731"/>
        <end position="857"/>
    </location>
</feature>
<feature type="domain" description="Cadherin 1" evidence="2">
    <location>
        <begin position="40"/>
        <end position="139"/>
    </location>
</feature>
<feature type="domain" description="Cadherin 2" evidence="2">
    <location>
        <begin position="140"/>
        <end position="252"/>
    </location>
</feature>
<feature type="domain" description="Cadherin 3" evidence="2">
    <location>
        <begin position="253"/>
        <end position="359"/>
    </location>
</feature>
<feature type="domain" description="Cadherin 4" evidence="2">
    <location>
        <begin position="365"/>
        <end position="478"/>
    </location>
</feature>
<feature type="domain" description="Cadherin 5" evidence="2">
    <location>
        <begin position="479"/>
        <end position="582"/>
    </location>
</feature>
<feature type="domain" description="Cadherin 6" evidence="2">
    <location>
        <begin position="574"/>
        <end position="693"/>
    </location>
</feature>
<feature type="region of interest" description="Disordered" evidence="3">
    <location>
        <begin position="746"/>
        <end position="765"/>
    </location>
</feature>
<feature type="compositionally biased region" description="Basic and acidic residues" evidence="3">
    <location>
        <begin position="752"/>
        <end position="765"/>
    </location>
</feature>
<proteinExistence type="evidence at transcript level"/>
<dbReference type="EMBL" id="AY684930">
    <property type="protein sequence ID" value="AAT92537.1"/>
    <property type="molecule type" value="mRNA"/>
</dbReference>
<dbReference type="RefSeq" id="NP_001005402.1">
    <property type="nucleotide sequence ID" value="NM_001005402.1"/>
</dbReference>
<dbReference type="SMR" id="Q6B3P0"/>
<dbReference type="FunCoup" id="Q6B3P0">
    <property type="interactions" value="1094"/>
</dbReference>
<dbReference type="STRING" id="7955.ENSDARP00000101442"/>
<dbReference type="PaxDb" id="7955-ENSDARP00000101442"/>
<dbReference type="Ensembl" id="ENSDART00000110005">
    <property type="protein sequence ID" value="ENSDARP00000101442"/>
    <property type="gene ID" value="ENSDARG00000004643"/>
</dbReference>
<dbReference type="GeneID" id="449008"/>
<dbReference type="KEGG" id="dre:449008"/>
<dbReference type="AGR" id="ZFIN:ZDB-GENE-040924-4"/>
<dbReference type="CTD" id="449008"/>
<dbReference type="ZFIN" id="ZDB-GENE-040924-4">
    <property type="gene designation" value="cdhr1a"/>
</dbReference>
<dbReference type="eggNOG" id="KOG3594">
    <property type="taxonomic scope" value="Eukaryota"/>
</dbReference>
<dbReference type="HOGENOM" id="CLU_017357_0_0_1"/>
<dbReference type="InParanoid" id="Q6B3P0"/>
<dbReference type="OMA" id="NMIDAQD"/>
<dbReference type="OrthoDB" id="6510378at2759"/>
<dbReference type="PhylomeDB" id="Q6B3P0"/>
<dbReference type="TreeFam" id="TF332908"/>
<dbReference type="PRO" id="PR:Q6B3P0"/>
<dbReference type="Proteomes" id="UP000000437">
    <property type="component" value="Chromosome 13"/>
</dbReference>
<dbReference type="Bgee" id="ENSDARG00000004643">
    <property type="expression patterns" value="Expressed in retina and 9 other cell types or tissues"/>
</dbReference>
<dbReference type="ExpressionAtlas" id="Q6B3P0">
    <property type="expression patterns" value="baseline and differential"/>
</dbReference>
<dbReference type="GO" id="GO:0005886">
    <property type="term" value="C:plasma membrane"/>
    <property type="evidence" value="ECO:0000318"/>
    <property type="project" value="GO_Central"/>
</dbReference>
<dbReference type="GO" id="GO:0005509">
    <property type="term" value="F:calcium ion binding"/>
    <property type="evidence" value="ECO:0007669"/>
    <property type="project" value="InterPro"/>
</dbReference>
<dbReference type="GO" id="GO:0007155">
    <property type="term" value="P:cell adhesion"/>
    <property type="evidence" value="ECO:0000318"/>
    <property type="project" value="GO_Central"/>
</dbReference>
<dbReference type="GO" id="GO:0007156">
    <property type="term" value="P:homophilic cell adhesion via plasma membrane adhesion molecules"/>
    <property type="evidence" value="ECO:0007669"/>
    <property type="project" value="InterPro"/>
</dbReference>
<dbReference type="GO" id="GO:0010842">
    <property type="term" value="P:retina layer formation"/>
    <property type="evidence" value="ECO:0000315"/>
    <property type="project" value="UniProtKB"/>
</dbReference>
<dbReference type="CDD" id="cd11304">
    <property type="entry name" value="Cadherin_repeat"/>
    <property type="match status" value="5"/>
</dbReference>
<dbReference type="FunFam" id="2.60.40.60:FF:000111">
    <property type="entry name" value="Cadherin-related family member 1"/>
    <property type="match status" value="1"/>
</dbReference>
<dbReference type="FunFam" id="2.60.40.60:FF:000113">
    <property type="entry name" value="Cadherin-related family member 1"/>
    <property type="match status" value="1"/>
</dbReference>
<dbReference type="FunFam" id="2.60.40.60:FF:000122">
    <property type="entry name" value="Cadherin-related family member 1"/>
    <property type="match status" value="1"/>
</dbReference>
<dbReference type="FunFam" id="2.60.40.60:FF:000124">
    <property type="entry name" value="Cadherin-related family member 1"/>
    <property type="match status" value="1"/>
</dbReference>
<dbReference type="FunFam" id="2.60.40.60:FF:000126">
    <property type="entry name" value="Cadherin-related family member 1"/>
    <property type="match status" value="1"/>
</dbReference>
<dbReference type="FunFam" id="2.60.40.60:FF:000177">
    <property type="entry name" value="Cadherin-related family member 1"/>
    <property type="match status" value="1"/>
</dbReference>
<dbReference type="Gene3D" id="2.60.40.60">
    <property type="entry name" value="Cadherins"/>
    <property type="match status" value="6"/>
</dbReference>
<dbReference type="InterPro" id="IPR002126">
    <property type="entry name" value="Cadherin-like_dom"/>
</dbReference>
<dbReference type="InterPro" id="IPR015919">
    <property type="entry name" value="Cadherin-like_sf"/>
</dbReference>
<dbReference type="InterPro" id="IPR020894">
    <property type="entry name" value="Cadherin_CS"/>
</dbReference>
<dbReference type="PANTHER" id="PTHR24026:SF133">
    <property type="entry name" value="CADHERIN-RELATED FAMILY MEMBER 2"/>
    <property type="match status" value="1"/>
</dbReference>
<dbReference type="PANTHER" id="PTHR24026">
    <property type="entry name" value="FAT ATYPICAL CADHERIN-RELATED"/>
    <property type="match status" value="1"/>
</dbReference>
<dbReference type="Pfam" id="PF00028">
    <property type="entry name" value="Cadherin"/>
    <property type="match status" value="4"/>
</dbReference>
<dbReference type="PRINTS" id="PR00205">
    <property type="entry name" value="CADHERIN"/>
</dbReference>
<dbReference type="SMART" id="SM00112">
    <property type="entry name" value="CA"/>
    <property type="match status" value="6"/>
</dbReference>
<dbReference type="SUPFAM" id="SSF49313">
    <property type="entry name" value="Cadherin-like"/>
    <property type="match status" value="6"/>
</dbReference>
<dbReference type="PROSITE" id="PS00232">
    <property type="entry name" value="CADHERIN_1"/>
    <property type="match status" value="2"/>
</dbReference>
<dbReference type="PROSITE" id="PS50268">
    <property type="entry name" value="CADHERIN_2"/>
    <property type="match status" value="6"/>
</dbReference>
<reference key="1">
    <citation type="journal article" date="2004" name="J. Biol. Chem.">
        <title>Proteolytic shedding of the extracellular domain of photoreceptor cadherin. Implications for outer segment assembly.</title>
        <authorList>
            <person name="Rattner A."/>
            <person name="Chen J."/>
            <person name="Nathans J."/>
        </authorList>
    </citation>
    <scope>NUCLEOTIDE SEQUENCE [MRNA]</scope>
    <scope>DEVELOPMENTAL STAGE</scope>
    <scope>TISSUE SPECIFICITY</scope>
</reference>
<reference key="2">
    <citation type="journal article" date="2019" name="Glia">
        <title>Genetic control of cellular morphogenesis in Mueller glia.</title>
        <authorList>
            <person name="Charlton-Perkins M."/>
            <person name="Almeida A.D."/>
            <person name="MacDonald R.B."/>
            <person name="Harris W.A."/>
        </authorList>
    </citation>
    <scope>FUNCTION</scope>
    <scope>DEVELOPMENTAL STAGE</scope>
    <scope>DISRUPTION PHENOTYPE</scope>
</reference>
<sequence length="857" mass="95169">MKNAREIQFSSFLLLAHFCFVGAQSDYAPYFYDNGPNSNNGNMALLNLSEDTPRGTQIYVLNGTDPEGQPVKYGITFEPGSKEFFRVHPKSGVVTLIEDLDREAQDEIEVFVSISDSLNKVVEKVSVFIMDANDERPQFQNMPSIVDVPENTTSGSSIYKVQAVDRDTGSGGSVTYFLQSSEQSPKFAIDHHSGVLRIKPGESLDYEKSRTHFITVVAKDGGGIYKGKQQVMSSSATLTINVIDTQDSPPIFIGTPYFGYVYEVSSPGSEIFTVSAKDGDMDNPNTIIYSLDSGADGSFSINKTSGVITLNLYPADLRREVFNIKVKALEISPEGKRLDFATTTVTIRVVDLNNHPPTFYGENGPQNVFELTMYEHPQEGEFLRGLKITVNDSDQGSNAKFNLRLVGPGRMLRVVPQTVLNEAQVTVLVEDSAAMDFEKSQFLTFKLLAVEIDTPERFSATADIIIHLLDTNDNAPKFTSDFYIARIPENSPGGSNVVSVTAMDPDSGIWGVVKYSIYGSGADIFLIQADSGIIYTQPWASLDAEVKSKYNFYVKAEDPEGKYSLAEVFVTITDLNDHPPAFNENSLEQTMVIGAPVKIEAIDEDAEEPNNLIEYSIMKADPDNIFDINADTGEIKLKPYIKSMDIVQNITNQRDCTWSVVVQAKDRGSPSFSTTTVVKIDITEATPLKGPLTSFFMNSRENPMHFLGLISGVILILVFVTVIISTVIFVRRNKANRILPSRRIIRKKRKPQKQDDFQEPFREEQEIPRADNVNFNNNIKVCSHRTPPSPPNAPVMPPPLPSHCRHGEREWTVPTVSASVASKSKKKSHRCKDNPVNTALVSELKLKLEQKNMANRY</sequence>
<evidence type="ECO:0000255" key="1"/>
<evidence type="ECO:0000255" key="2">
    <source>
        <dbReference type="PROSITE-ProRule" id="PRU00043"/>
    </source>
</evidence>
<evidence type="ECO:0000256" key="3">
    <source>
        <dbReference type="SAM" id="MobiDB-lite"/>
    </source>
</evidence>
<evidence type="ECO:0000269" key="4">
    <source>
    </source>
</evidence>
<evidence type="ECO:0000269" key="5">
    <source>
    </source>
</evidence>
<evidence type="ECO:0000305" key="6"/>
<keyword id="KW-0106">Calcium</keyword>
<keyword id="KW-0130">Cell adhesion</keyword>
<keyword id="KW-0472">Membrane</keyword>
<keyword id="KW-0675">Receptor</keyword>
<keyword id="KW-1185">Reference proteome</keyword>
<keyword id="KW-0677">Repeat</keyword>
<keyword id="KW-0732">Signal</keyword>
<keyword id="KW-0812">Transmembrane</keyword>
<keyword id="KW-1133">Transmembrane helix</keyword>
<organism>
    <name type="scientific">Danio rerio</name>
    <name type="common">Zebrafish</name>
    <name type="synonym">Brachydanio rerio</name>
    <dbReference type="NCBI Taxonomy" id="7955"/>
    <lineage>
        <taxon>Eukaryota</taxon>
        <taxon>Metazoa</taxon>
        <taxon>Chordata</taxon>
        <taxon>Craniata</taxon>
        <taxon>Vertebrata</taxon>
        <taxon>Euteleostomi</taxon>
        <taxon>Actinopterygii</taxon>
        <taxon>Neopterygii</taxon>
        <taxon>Teleostei</taxon>
        <taxon>Ostariophysi</taxon>
        <taxon>Cypriniformes</taxon>
        <taxon>Danionidae</taxon>
        <taxon>Danioninae</taxon>
        <taxon>Danio</taxon>
    </lineage>
</organism>
<protein>
    <recommendedName>
        <fullName evidence="6">Cadherin-related family member 1a</fullName>
    </recommendedName>
    <alternativeName>
        <fullName>Photoreceptor cadherin</fullName>
        <shortName>prCAD</shortName>
    </alternativeName>
    <alternativeName>
        <fullName>Protocadherin-21</fullName>
    </alternativeName>
</protein>
<accession>Q6B3P0</accession>
<name>CDHR1_DANRE</name>
<comment type="function">
    <text evidence="5">Potential calcium-dependent cell-adhesion protein. Plays a role in the organization of retinal cell layers and Muller glia morphology (PubMed:30924555).</text>
</comment>
<comment type="subcellular location">
    <subcellularLocation>
        <location evidence="6">Membrane</location>
        <topology evidence="6">Single-pass membrane protein</topology>
    </subcellularLocation>
</comment>
<comment type="tissue specificity">
    <text evidence="4">Expressed in photoreceptor cells of the outer nuclear layer of the retina and in the pinal gland.</text>
</comment>
<comment type="developmental stage">
    <text evidence="4 5">Abundantly expressed in the eye from 48 hpf to 192 hpf.</text>
</comment>
<comment type="disruption phenotype">
    <text evidence="5">Irregularly shaped Muller glia cells and disorganized retinal cell layers.</text>
</comment>
<gene>
    <name evidence="6" type="primary">cdhr1a</name>
    <name type="synonym">cdhr1</name>
    <name type="synonym">pcdh21</name>
    <name type="synonym">prcad</name>
</gene>